<feature type="chain" id="PRO_1000085209" description="Chaperone protein DnaJ">
    <location>
        <begin position="1"/>
        <end position="386"/>
    </location>
</feature>
<feature type="domain" description="J" evidence="1">
    <location>
        <begin position="5"/>
        <end position="70"/>
    </location>
</feature>
<feature type="repeat" description="CXXCXGXG motif">
    <location>
        <begin position="151"/>
        <end position="158"/>
    </location>
</feature>
<feature type="repeat" description="CXXCXGXG motif">
    <location>
        <begin position="168"/>
        <end position="175"/>
    </location>
</feature>
<feature type="repeat" description="CXXCXGXG motif">
    <location>
        <begin position="190"/>
        <end position="197"/>
    </location>
</feature>
<feature type="repeat" description="CXXCXGXG motif">
    <location>
        <begin position="204"/>
        <end position="211"/>
    </location>
</feature>
<feature type="zinc finger region" description="CR-type" evidence="1">
    <location>
        <begin position="138"/>
        <end position="216"/>
    </location>
</feature>
<feature type="binding site" evidence="1">
    <location>
        <position position="151"/>
    </location>
    <ligand>
        <name>Zn(2+)</name>
        <dbReference type="ChEBI" id="CHEBI:29105"/>
        <label>1</label>
    </ligand>
</feature>
<feature type="binding site" evidence="1">
    <location>
        <position position="154"/>
    </location>
    <ligand>
        <name>Zn(2+)</name>
        <dbReference type="ChEBI" id="CHEBI:29105"/>
        <label>1</label>
    </ligand>
</feature>
<feature type="binding site" evidence="1">
    <location>
        <position position="168"/>
    </location>
    <ligand>
        <name>Zn(2+)</name>
        <dbReference type="ChEBI" id="CHEBI:29105"/>
        <label>2</label>
    </ligand>
</feature>
<feature type="binding site" evidence="1">
    <location>
        <position position="171"/>
    </location>
    <ligand>
        <name>Zn(2+)</name>
        <dbReference type="ChEBI" id="CHEBI:29105"/>
        <label>2</label>
    </ligand>
</feature>
<feature type="binding site" evidence="1">
    <location>
        <position position="190"/>
    </location>
    <ligand>
        <name>Zn(2+)</name>
        <dbReference type="ChEBI" id="CHEBI:29105"/>
        <label>2</label>
    </ligand>
</feature>
<feature type="binding site" evidence="1">
    <location>
        <position position="193"/>
    </location>
    <ligand>
        <name>Zn(2+)</name>
        <dbReference type="ChEBI" id="CHEBI:29105"/>
        <label>2</label>
    </ligand>
</feature>
<feature type="binding site" evidence="1">
    <location>
        <position position="204"/>
    </location>
    <ligand>
        <name>Zn(2+)</name>
        <dbReference type="ChEBI" id="CHEBI:29105"/>
        <label>1</label>
    </ligand>
</feature>
<feature type="binding site" evidence="1">
    <location>
        <position position="207"/>
    </location>
    <ligand>
        <name>Zn(2+)</name>
        <dbReference type="ChEBI" id="CHEBI:29105"/>
        <label>1</label>
    </ligand>
</feature>
<dbReference type="EMBL" id="CP000158">
    <property type="protein sequence ID" value="ABI77053.1"/>
    <property type="molecule type" value="Genomic_DNA"/>
</dbReference>
<dbReference type="RefSeq" id="WP_011645789.1">
    <property type="nucleotide sequence ID" value="NC_008358.1"/>
</dbReference>
<dbReference type="SMR" id="Q0C454"/>
<dbReference type="STRING" id="228405.HNE_0761"/>
<dbReference type="KEGG" id="hne:HNE_0761"/>
<dbReference type="eggNOG" id="COG0484">
    <property type="taxonomic scope" value="Bacteria"/>
</dbReference>
<dbReference type="HOGENOM" id="CLU_017633_0_7_5"/>
<dbReference type="Proteomes" id="UP000001959">
    <property type="component" value="Chromosome"/>
</dbReference>
<dbReference type="GO" id="GO:0005737">
    <property type="term" value="C:cytoplasm"/>
    <property type="evidence" value="ECO:0007669"/>
    <property type="project" value="UniProtKB-SubCell"/>
</dbReference>
<dbReference type="GO" id="GO:0005524">
    <property type="term" value="F:ATP binding"/>
    <property type="evidence" value="ECO:0007669"/>
    <property type="project" value="InterPro"/>
</dbReference>
<dbReference type="GO" id="GO:0031072">
    <property type="term" value="F:heat shock protein binding"/>
    <property type="evidence" value="ECO:0007669"/>
    <property type="project" value="InterPro"/>
</dbReference>
<dbReference type="GO" id="GO:0051082">
    <property type="term" value="F:unfolded protein binding"/>
    <property type="evidence" value="ECO:0007669"/>
    <property type="project" value="UniProtKB-UniRule"/>
</dbReference>
<dbReference type="GO" id="GO:0008270">
    <property type="term" value="F:zinc ion binding"/>
    <property type="evidence" value="ECO:0007669"/>
    <property type="project" value="UniProtKB-UniRule"/>
</dbReference>
<dbReference type="GO" id="GO:0051085">
    <property type="term" value="P:chaperone cofactor-dependent protein refolding"/>
    <property type="evidence" value="ECO:0007669"/>
    <property type="project" value="TreeGrafter"/>
</dbReference>
<dbReference type="GO" id="GO:0006260">
    <property type="term" value="P:DNA replication"/>
    <property type="evidence" value="ECO:0007669"/>
    <property type="project" value="UniProtKB-KW"/>
</dbReference>
<dbReference type="GO" id="GO:0042026">
    <property type="term" value="P:protein refolding"/>
    <property type="evidence" value="ECO:0007669"/>
    <property type="project" value="TreeGrafter"/>
</dbReference>
<dbReference type="GO" id="GO:0009408">
    <property type="term" value="P:response to heat"/>
    <property type="evidence" value="ECO:0007669"/>
    <property type="project" value="InterPro"/>
</dbReference>
<dbReference type="CDD" id="cd06257">
    <property type="entry name" value="DnaJ"/>
    <property type="match status" value="1"/>
</dbReference>
<dbReference type="CDD" id="cd10747">
    <property type="entry name" value="DnaJ_C"/>
    <property type="match status" value="1"/>
</dbReference>
<dbReference type="CDD" id="cd10719">
    <property type="entry name" value="DnaJ_zf"/>
    <property type="match status" value="1"/>
</dbReference>
<dbReference type="FunFam" id="1.10.287.110:FF:000034">
    <property type="entry name" value="Chaperone protein DnaJ"/>
    <property type="match status" value="1"/>
</dbReference>
<dbReference type="FunFam" id="2.10.230.10:FF:000002">
    <property type="entry name" value="Molecular chaperone DnaJ"/>
    <property type="match status" value="1"/>
</dbReference>
<dbReference type="FunFam" id="2.60.260.20:FF:000004">
    <property type="entry name" value="Molecular chaperone DnaJ"/>
    <property type="match status" value="1"/>
</dbReference>
<dbReference type="Gene3D" id="1.10.287.110">
    <property type="entry name" value="DnaJ domain"/>
    <property type="match status" value="1"/>
</dbReference>
<dbReference type="Gene3D" id="2.10.230.10">
    <property type="entry name" value="Heat shock protein DnaJ, cysteine-rich domain"/>
    <property type="match status" value="1"/>
</dbReference>
<dbReference type="Gene3D" id="2.60.260.20">
    <property type="entry name" value="Urease metallochaperone UreE, N-terminal domain"/>
    <property type="match status" value="2"/>
</dbReference>
<dbReference type="HAMAP" id="MF_01152">
    <property type="entry name" value="DnaJ"/>
    <property type="match status" value="1"/>
</dbReference>
<dbReference type="InterPro" id="IPR012724">
    <property type="entry name" value="DnaJ"/>
</dbReference>
<dbReference type="InterPro" id="IPR002939">
    <property type="entry name" value="DnaJ_C"/>
</dbReference>
<dbReference type="InterPro" id="IPR001623">
    <property type="entry name" value="DnaJ_domain"/>
</dbReference>
<dbReference type="InterPro" id="IPR018253">
    <property type="entry name" value="DnaJ_domain_CS"/>
</dbReference>
<dbReference type="InterPro" id="IPR008971">
    <property type="entry name" value="HSP40/DnaJ_pept-bd"/>
</dbReference>
<dbReference type="InterPro" id="IPR001305">
    <property type="entry name" value="HSP_DnaJ_Cys-rich_dom"/>
</dbReference>
<dbReference type="InterPro" id="IPR036410">
    <property type="entry name" value="HSP_DnaJ_Cys-rich_dom_sf"/>
</dbReference>
<dbReference type="InterPro" id="IPR036869">
    <property type="entry name" value="J_dom_sf"/>
</dbReference>
<dbReference type="NCBIfam" id="TIGR02349">
    <property type="entry name" value="DnaJ_bact"/>
    <property type="match status" value="1"/>
</dbReference>
<dbReference type="NCBIfam" id="NF008035">
    <property type="entry name" value="PRK10767.1"/>
    <property type="match status" value="1"/>
</dbReference>
<dbReference type="PANTHER" id="PTHR43096:SF48">
    <property type="entry name" value="CHAPERONE PROTEIN DNAJ"/>
    <property type="match status" value="1"/>
</dbReference>
<dbReference type="PANTHER" id="PTHR43096">
    <property type="entry name" value="DNAJ HOMOLOG 1, MITOCHONDRIAL-RELATED"/>
    <property type="match status" value="1"/>
</dbReference>
<dbReference type="Pfam" id="PF00226">
    <property type="entry name" value="DnaJ"/>
    <property type="match status" value="1"/>
</dbReference>
<dbReference type="Pfam" id="PF01556">
    <property type="entry name" value="DnaJ_C"/>
    <property type="match status" value="1"/>
</dbReference>
<dbReference type="Pfam" id="PF00684">
    <property type="entry name" value="DnaJ_CXXCXGXG"/>
    <property type="match status" value="1"/>
</dbReference>
<dbReference type="PRINTS" id="PR00625">
    <property type="entry name" value="JDOMAIN"/>
</dbReference>
<dbReference type="SMART" id="SM00271">
    <property type="entry name" value="DnaJ"/>
    <property type="match status" value="1"/>
</dbReference>
<dbReference type="SUPFAM" id="SSF46565">
    <property type="entry name" value="Chaperone J-domain"/>
    <property type="match status" value="1"/>
</dbReference>
<dbReference type="SUPFAM" id="SSF57938">
    <property type="entry name" value="DnaJ/Hsp40 cysteine-rich domain"/>
    <property type="match status" value="1"/>
</dbReference>
<dbReference type="SUPFAM" id="SSF49493">
    <property type="entry name" value="HSP40/DnaJ peptide-binding domain"/>
    <property type="match status" value="2"/>
</dbReference>
<dbReference type="PROSITE" id="PS00636">
    <property type="entry name" value="DNAJ_1"/>
    <property type="match status" value="1"/>
</dbReference>
<dbReference type="PROSITE" id="PS50076">
    <property type="entry name" value="DNAJ_2"/>
    <property type="match status" value="1"/>
</dbReference>
<dbReference type="PROSITE" id="PS51188">
    <property type="entry name" value="ZF_CR"/>
    <property type="match status" value="1"/>
</dbReference>
<protein>
    <recommendedName>
        <fullName evidence="1">Chaperone protein DnaJ</fullName>
    </recommendedName>
</protein>
<name>DNAJ_HYPNA</name>
<gene>
    <name evidence="1" type="primary">dnaJ</name>
    <name type="ordered locus">HNE_0761</name>
</gene>
<keyword id="KW-0143">Chaperone</keyword>
<keyword id="KW-0963">Cytoplasm</keyword>
<keyword id="KW-0235">DNA replication</keyword>
<keyword id="KW-0479">Metal-binding</keyword>
<keyword id="KW-1185">Reference proteome</keyword>
<keyword id="KW-0677">Repeat</keyword>
<keyword id="KW-0346">Stress response</keyword>
<keyword id="KW-0862">Zinc</keyword>
<keyword id="KW-0863">Zinc-finger</keyword>
<sequence length="386" mass="41861">MSKRDYYEVLGVERGVDEKALKSAYRKLAMKYHPDQNAGDTAAEDKFKEVGEAYAILSDPQKRAAYDRYGHGAFENGGMGGGSPFGGQGGNPEDIFQDLFSQVFGAGGFAGGRRRSGPQRGADLRYDLEITLEEAFYGKDETIHVPQAVACRPCEGTGAAPGTKPETCETCGGHGRVRAQQGFFTMERTCHICQGRGQIIRKPCKTCGGHGQVKEERKLQVKIPAGVESGMRIRLSGEGEPGTSGGPKGDLYIFVEVVEHDIFERDGPNLYCRAPVPMTTAALGGEIDIPTIDGGRARVAIPEGAQTGRKLRLRSKGMPSVRANGQTGDLYVEMFVETPQNLTARQKDLLRQFCDCSGADCHPESEGFLGKIKRFWGGEGDEKRPV</sequence>
<reference key="1">
    <citation type="journal article" date="2006" name="J. Bacteriol.">
        <title>Comparative genomic evidence for a close relationship between the dimorphic prosthecate bacteria Hyphomonas neptunium and Caulobacter crescentus.</title>
        <authorList>
            <person name="Badger J.H."/>
            <person name="Hoover T.R."/>
            <person name="Brun Y.V."/>
            <person name="Weiner R.M."/>
            <person name="Laub M.T."/>
            <person name="Alexandre G."/>
            <person name="Mrazek J."/>
            <person name="Ren Q."/>
            <person name="Paulsen I.T."/>
            <person name="Nelson K.E."/>
            <person name="Khouri H.M."/>
            <person name="Radune D."/>
            <person name="Sosa J."/>
            <person name="Dodson R.J."/>
            <person name="Sullivan S.A."/>
            <person name="Rosovitz M.J."/>
            <person name="Madupu R."/>
            <person name="Brinkac L.M."/>
            <person name="Durkin A.S."/>
            <person name="Daugherty S.C."/>
            <person name="Kothari S.P."/>
            <person name="Giglio M.G."/>
            <person name="Zhou L."/>
            <person name="Haft D.H."/>
            <person name="Selengut J.D."/>
            <person name="Davidsen T.M."/>
            <person name="Yang Q."/>
            <person name="Zafar N."/>
            <person name="Ward N.L."/>
        </authorList>
    </citation>
    <scope>NUCLEOTIDE SEQUENCE [LARGE SCALE GENOMIC DNA]</scope>
    <source>
        <strain>ATCC 15444</strain>
    </source>
</reference>
<proteinExistence type="inferred from homology"/>
<evidence type="ECO:0000255" key="1">
    <source>
        <dbReference type="HAMAP-Rule" id="MF_01152"/>
    </source>
</evidence>
<accession>Q0C454</accession>
<organism>
    <name type="scientific">Hyphomonas neptunium (strain ATCC 15444)</name>
    <dbReference type="NCBI Taxonomy" id="228405"/>
    <lineage>
        <taxon>Bacteria</taxon>
        <taxon>Pseudomonadati</taxon>
        <taxon>Pseudomonadota</taxon>
        <taxon>Alphaproteobacteria</taxon>
        <taxon>Hyphomonadales</taxon>
        <taxon>Hyphomonadaceae</taxon>
        <taxon>Hyphomonas</taxon>
    </lineage>
</organism>
<comment type="function">
    <text evidence="1">Participates actively in the response to hyperosmotic and heat shock by preventing the aggregation of stress-denatured proteins and by disaggregating proteins, also in an autonomous, DnaK-independent fashion. Unfolded proteins bind initially to DnaJ; upon interaction with the DnaJ-bound protein, DnaK hydrolyzes its bound ATP, resulting in the formation of a stable complex. GrpE releases ADP from DnaK; ATP binding to DnaK triggers the release of the substrate protein, thus completing the reaction cycle. Several rounds of ATP-dependent interactions between DnaJ, DnaK and GrpE are required for fully efficient folding. Also involved, together with DnaK and GrpE, in the DNA replication of plasmids through activation of initiation proteins.</text>
</comment>
<comment type="cofactor">
    <cofactor evidence="1">
        <name>Zn(2+)</name>
        <dbReference type="ChEBI" id="CHEBI:29105"/>
    </cofactor>
    <text evidence="1">Binds 2 Zn(2+) ions per monomer.</text>
</comment>
<comment type="subunit">
    <text evidence="1">Homodimer.</text>
</comment>
<comment type="subcellular location">
    <subcellularLocation>
        <location evidence="1">Cytoplasm</location>
    </subcellularLocation>
</comment>
<comment type="domain">
    <text evidence="1">The J domain is necessary and sufficient to stimulate DnaK ATPase activity. Zinc center 1 plays an important role in the autonomous, DnaK-independent chaperone activity of DnaJ. Zinc center 2 is essential for interaction with DnaK and for DnaJ activity.</text>
</comment>
<comment type="similarity">
    <text evidence="1">Belongs to the DnaJ family.</text>
</comment>